<proteinExistence type="evidence at protein level"/>
<reference evidence="5" key="1">
    <citation type="journal article" date="2009" name="BMC Evol. Biol.">
        <title>A proteomic approach for studying insect phylogeny: CAPA peptides of ancient insect taxa (Dictyoptera, Blattoptera) as a test case.</title>
        <authorList>
            <person name="Roth S."/>
            <person name="Fromm B."/>
            <person name="Gaede G."/>
            <person name="Predel R."/>
        </authorList>
    </citation>
    <scope>PROTEIN SEQUENCE</scope>
    <scope>AMIDATION AT LEU-17</scope>
    <source>
        <tissue evidence="3">Abdominal perisympathetic organs</tissue>
    </source>
</reference>
<dbReference type="GO" id="GO:0005576">
    <property type="term" value="C:extracellular region"/>
    <property type="evidence" value="ECO:0007669"/>
    <property type="project" value="UniProtKB-SubCell"/>
</dbReference>
<dbReference type="GO" id="GO:0005184">
    <property type="term" value="F:neuropeptide hormone activity"/>
    <property type="evidence" value="ECO:0007669"/>
    <property type="project" value="InterPro"/>
</dbReference>
<dbReference type="GO" id="GO:0007218">
    <property type="term" value="P:neuropeptide signaling pathway"/>
    <property type="evidence" value="ECO:0007669"/>
    <property type="project" value="UniProtKB-KW"/>
</dbReference>
<dbReference type="InterPro" id="IPR001484">
    <property type="entry name" value="Pyrokinin_CS"/>
</dbReference>
<dbReference type="PROSITE" id="PS00539">
    <property type="entry name" value="PYROKININ"/>
    <property type="match status" value="1"/>
</dbReference>
<organism>
    <name type="scientific">Gyna cf. cafforum (strain SR-2005)</name>
    <name type="common">Cockroach</name>
    <dbReference type="NCBI Taxonomy" id="348763"/>
    <lineage>
        <taxon>Eukaryota</taxon>
        <taxon>Metazoa</taxon>
        <taxon>Ecdysozoa</taxon>
        <taxon>Arthropoda</taxon>
        <taxon>Hexapoda</taxon>
        <taxon>Insecta</taxon>
        <taxon>Pterygota</taxon>
        <taxon>Neoptera</taxon>
        <taxon>Polyneoptera</taxon>
        <taxon>Dictyoptera</taxon>
        <taxon>Blattodea</taxon>
        <taxon>Blaberoidea</taxon>
        <taxon>Blaberidae</taxon>
        <taxon>Gyninae</taxon>
        <taxon>Gyna</taxon>
    </lineage>
</organism>
<name>PPK5_GYNCS</name>
<accession>P85646</accession>
<comment type="function">
    <text evidence="1">Myoactive.</text>
</comment>
<comment type="subcellular location">
    <subcellularLocation>
        <location evidence="5">Secreted</location>
    </subcellularLocation>
</comment>
<comment type="similarity">
    <text evidence="2">Belongs to the pyrokinin family.</text>
</comment>
<sequence length="17" mass="1810">AGDTSSEAKGMWFGPRL</sequence>
<feature type="peptide" id="PRO_0000378697" description="Pyrokinin-5" evidence="3">
    <location>
        <begin position="1"/>
        <end position="17"/>
    </location>
</feature>
<feature type="modified residue" description="Leucine amide" evidence="3">
    <location>
        <position position="17"/>
    </location>
</feature>
<evidence type="ECO:0000250" key="1">
    <source>
        <dbReference type="UniProtKB" id="P82617"/>
    </source>
</evidence>
<evidence type="ECO:0000255" key="2"/>
<evidence type="ECO:0000269" key="3">
    <source>
    </source>
</evidence>
<evidence type="ECO:0000303" key="4">
    <source>
    </source>
</evidence>
<evidence type="ECO:0000305" key="5"/>
<keyword id="KW-0027">Amidation</keyword>
<keyword id="KW-0903">Direct protein sequencing</keyword>
<keyword id="KW-0527">Neuropeptide</keyword>
<keyword id="KW-0964">Secreted</keyword>
<protein>
    <recommendedName>
        <fullName evidence="1">Pyrokinin-5</fullName>
    </recommendedName>
    <alternativeName>
        <fullName evidence="1">FXPRL-amide</fullName>
    </alternativeName>
    <alternativeName>
        <fullName evidence="4">GynCa-Capa-PK</fullName>
    </alternativeName>
</protein>